<name>MAUL_METME</name>
<organism>
    <name type="scientific">Methylophilus methylotrophus</name>
    <name type="common">Bacterium W3A1</name>
    <dbReference type="NCBI Taxonomy" id="17"/>
    <lineage>
        <taxon>Bacteria</taxon>
        <taxon>Pseudomonadati</taxon>
        <taxon>Pseudomonadota</taxon>
        <taxon>Betaproteobacteria</taxon>
        <taxon>Nitrosomonadales</taxon>
        <taxon>Methylophilaceae</taxon>
        <taxon>Methylophilus</taxon>
    </lineage>
</organism>
<reference key="1">
    <citation type="journal article" date="1994" name="J. Bacteriol.">
        <title>Organization of the methylamine utilization (mau) genes in Methylophilus methylotrophus W3A1-NS.</title>
        <authorList>
            <person name="Chistoserdov A.Y."/>
            <person name="McIntire W.S."/>
            <person name="Mathews F.S."/>
            <person name="Lidstrom M.E."/>
        </authorList>
    </citation>
    <scope>NUCLEOTIDE SEQUENCE [GENOMIC DNA]</scope>
</reference>
<comment type="function">
    <text>Probably involved in TTQ prosthetic group biosynthesis.</text>
</comment>
<comment type="pathway">
    <text>One-carbon metabolism; methylamine degradation.</text>
</comment>
<feature type="chain" id="PRO_0000208947" description="Methylamine utilization protein MauL">
    <location>
        <begin position="1"/>
        <end position="174"/>
    </location>
</feature>
<proteinExistence type="predicted"/>
<accession>Q50234</accession>
<sequence>MKTFLPGLMSASRKLSAWIGLYALLVLLALYLASCSAASHAPLKQSASDPAHSHRMTLSDHEFAPVDFEPQPGDTITIRNRSDISHSIYVTYPDGTMVNLGVQTPGTTVHWQVPADAKGEFVLQCWIHPIIRANLLVNAANLSSSAFKSALPKFTRQEILDGRQNICSSRNRRA</sequence>
<protein>
    <recommendedName>
        <fullName>Methylamine utilization protein MauL</fullName>
    </recommendedName>
</protein>
<dbReference type="EMBL" id="L26407">
    <property type="protein sequence ID" value="AAB46953.1"/>
    <property type="molecule type" value="Genomic_DNA"/>
</dbReference>
<dbReference type="PIR" id="T10075">
    <property type="entry name" value="T10075"/>
</dbReference>
<dbReference type="SMR" id="Q50234"/>
<dbReference type="UniPathway" id="UPA00895"/>
<dbReference type="CDD" id="cd04221">
    <property type="entry name" value="MauL"/>
    <property type="match status" value="1"/>
</dbReference>
<dbReference type="Gene3D" id="2.60.40.420">
    <property type="entry name" value="Cupredoxins - blue copper proteins"/>
    <property type="match status" value="1"/>
</dbReference>
<dbReference type="InterPro" id="IPR008972">
    <property type="entry name" value="Cupredoxin"/>
</dbReference>
<dbReference type="InterPro" id="IPR034242">
    <property type="entry name" value="MauL"/>
</dbReference>
<dbReference type="SUPFAM" id="SSF49503">
    <property type="entry name" value="Cupredoxins"/>
    <property type="match status" value="1"/>
</dbReference>
<gene>
    <name type="primary">mauL</name>
</gene>